<accession>A8WUP2</accession>
<name>HOOK_CAEBR</name>
<dbReference type="EMBL" id="HE601438">
    <property type="protein sequence ID" value="CAP24204.2"/>
    <property type="molecule type" value="Genomic_DNA"/>
</dbReference>
<dbReference type="SMR" id="A8WUP2"/>
<dbReference type="FunCoup" id="A8WUP2">
    <property type="interactions" value="1776"/>
</dbReference>
<dbReference type="STRING" id="6238.A8WUP2"/>
<dbReference type="EnsemblMetazoa" id="CBG02287a.1">
    <property type="protein sequence ID" value="CBG02287a.1"/>
    <property type="gene ID" value="WBGene00025365"/>
</dbReference>
<dbReference type="WormBase" id="CBG02287a">
    <property type="protein sequence ID" value="CBP25226"/>
    <property type="gene ID" value="WBGene00025365"/>
    <property type="gene designation" value="Cbr-zyg-12"/>
</dbReference>
<dbReference type="eggNOG" id="ENOG502QTJ1">
    <property type="taxonomic scope" value="Eukaryota"/>
</dbReference>
<dbReference type="HOGENOM" id="CLU_365346_0_0_1"/>
<dbReference type="InParanoid" id="A8WUP2"/>
<dbReference type="OMA" id="WRAKANQ"/>
<dbReference type="Proteomes" id="UP000008549">
    <property type="component" value="Unassembled WGS sequence"/>
</dbReference>
<dbReference type="GO" id="GO:0005813">
    <property type="term" value="C:centrosome"/>
    <property type="evidence" value="ECO:0000318"/>
    <property type="project" value="GO_Central"/>
</dbReference>
<dbReference type="GO" id="GO:0005737">
    <property type="term" value="C:cytoplasm"/>
    <property type="evidence" value="ECO:0000318"/>
    <property type="project" value="GO_Central"/>
</dbReference>
<dbReference type="GO" id="GO:0005874">
    <property type="term" value="C:microtubule"/>
    <property type="evidence" value="ECO:0007669"/>
    <property type="project" value="UniProtKB-KW"/>
</dbReference>
<dbReference type="GO" id="GO:0031965">
    <property type="term" value="C:nuclear membrane"/>
    <property type="evidence" value="ECO:0007669"/>
    <property type="project" value="UniProtKB-SubCell"/>
</dbReference>
<dbReference type="GO" id="GO:0051959">
    <property type="term" value="F:dynein light intermediate chain binding"/>
    <property type="evidence" value="ECO:0000318"/>
    <property type="project" value="GO_Central"/>
</dbReference>
<dbReference type="GO" id="GO:0008017">
    <property type="term" value="F:microtubule binding"/>
    <property type="evidence" value="ECO:0000318"/>
    <property type="project" value="GO_Central"/>
</dbReference>
<dbReference type="GO" id="GO:0031122">
    <property type="term" value="P:cytoplasmic microtubule organization"/>
    <property type="evidence" value="ECO:0000318"/>
    <property type="project" value="GO_Central"/>
</dbReference>
<dbReference type="GO" id="GO:0030705">
    <property type="term" value="P:cytoskeleton-dependent intracellular transport"/>
    <property type="evidence" value="ECO:0000318"/>
    <property type="project" value="GO_Central"/>
</dbReference>
<dbReference type="CDD" id="cd22211">
    <property type="entry name" value="HkD_SF"/>
    <property type="match status" value="1"/>
</dbReference>
<dbReference type="FunFam" id="1.10.418.10:FF:000143">
    <property type="entry name" value="Zygote defective protein 12"/>
    <property type="match status" value="1"/>
</dbReference>
<dbReference type="Gene3D" id="1.10.418.10">
    <property type="entry name" value="Calponin-like domain"/>
    <property type="match status" value="1"/>
</dbReference>
<dbReference type="InterPro" id="IPR001715">
    <property type="entry name" value="CH_dom"/>
</dbReference>
<dbReference type="InterPro" id="IPR036872">
    <property type="entry name" value="CH_dom_sf"/>
</dbReference>
<dbReference type="InterPro" id="IPR043936">
    <property type="entry name" value="HOOK_N"/>
</dbReference>
<dbReference type="PANTHER" id="PTHR18947">
    <property type="entry name" value="HOOK PROTEINS"/>
    <property type="match status" value="1"/>
</dbReference>
<dbReference type="PANTHER" id="PTHR18947:SF39">
    <property type="entry name" value="PROTEIN HOOK"/>
    <property type="match status" value="1"/>
</dbReference>
<dbReference type="Pfam" id="PF19047">
    <property type="entry name" value="HOOK_N"/>
    <property type="match status" value="1"/>
</dbReference>
<dbReference type="SUPFAM" id="SSF116907">
    <property type="entry name" value="Hook domain"/>
    <property type="match status" value="1"/>
</dbReference>
<dbReference type="PROSITE" id="PS50021">
    <property type="entry name" value="CH"/>
    <property type="match status" value="1"/>
</dbReference>
<comment type="function">
    <text evidence="1">Cytoskeletal linker protein, which is essential for attachment of the centrosome to the nucleus. Required for dynein localization to the nuclear envelope (By similarity).</text>
</comment>
<comment type="subunit">
    <text evidence="1">Homodimer. Interacts with the dynein subunit dli-1 via its N-terminus. May interact with microtubules (By similarity).</text>
</comment>
<comment type="subcellular location">
    <subcellularLocation>
        <location evidence="1">Nucleus membrane</location>
    </subcellularLocation>
    <subcellularLocation>
        <location evidence="1">Cytoplasm</location>
        <location evidence="1">Cytoskeleton</location>
        <location evidence="1">Microtubule organizing center</location>
        <location evidence="1">Centrosome</location>
    </subcellularLocation>
    <subcellularLocation>
        <location evidence="1">Cytoplasm</location>
        <location evidence="1">Cytoskeleton</location>
    </subcellularLocation>
    <text evidence="1">Localizes to the minus end of microtubules, proximal to the centrosome. Centrosomal localization requires sun-1 and microtubules.</text>
</comment>
<comment type="domain">
    <text evidence="1">The large coiled coil domain is required for homodimerization.</text>
</comment>
<comment type="similarity">
    <text evidence="5">Belongs to the hook family.</text>
</comment>
<reference key="1">
    <citation type="journal article" date="2003" name="PLoS Biol.">
        <title>The genome sequence of Caenorhabditis briggsae: a platform for comparative genomics.</title>
        <authorList>
            <person name="Stein L.D."/>
            <person name="Bao Z."/>
            <person name="Blasiar D."/>
            <person name="Blumenthal T."/>
            <person name="Brent M.R."/>
            <person name="Chen N."/>
            <person name="Chinwalla A."/>
            <person name="Clarke L."/>
            <person name="Clee C."/>
            <person name="Coghlan A."/>
            <person name="Coulson A."/>
            <person name="D'Eustachio P."/>
            <person name="Fitch D.H.A."/>
            <person name="Fulton L.A."/>
            <person name="Fulton R.E."/>
            <person name="Griffiths-Jones S."/>
            <person name="Harris T.W."/>
            <person name="Hillier L.W."/>
            <person name="Kamath R."/>
            <person name="Kuwabara P.E."/>
            <person name="Mardis E.R."/>
            <person name="Marra M.A."/>
            <person name="Miner T.L."/>
            <person name="Minx P."/>
            <person name="Mullikin J.C."/>
            <person name="Plumb R.W."/>
            <person name="Rogers J."/>
            <person name="Schein J.E."/>
            <person name="Sohrmann M."/>
            <person name="Spieth J."/>
            <person name="Stajich J.E."/>
            <person name="Wei C."/>
            <person name="Willey D."/>
            <person name="Wilson R.K."/>
            <person name="Durbin R.M."/>
            <person name="Waterston R.H."/>
        </authorList>
    </citation>
    <scope>NUCLEOTIDE SEQUENCE [LARGE SCALE GENOMIC DNA]</scope>
    <source>
        <strain>AF16</strain>
    </source>
</reference>
<proteinExistence type="inferred from homology"/>
<keyword id="KW-0175">Coiled coil</keyword>
<keyword id="KW-0963">Cytoplasm</keyword>
<keyword id="KW-0206">Cytoskeleton</keyword>
<keyword id="KW-0472">Membrane</keyword>
<keyword id="KW-0493">Microtubule</keyword>
<keyword id="KW-0539">Nucleus</keyword>
<keyword id="KW-1185">Reference proteome</keyword>
<keyword id="KW-0812">Transmembrane</keyword>
<keyword id="KW-1133">Transmembrane helix</keyword>
<feature type="chain" id="PRO_0000379058" description="Zygote defective protein 12">
    <location>
        <begin position="1"/>
        <end position="764"/>
    </location>
</feature>
<feature type="transmembrane region" description="Helical" evidence="2">
    <location>
        <begin position="732"/>
        <end position="752"/>
    </location>
</feature>
<feature type="domain" description="Calponin-homology (CH)" evidence="3">
    <location>
        <begin position="43"/>
        <end position="169"/>
    </location>
</feature>
<feature type="region of interest" description="Interaction with dli-1" evidence="1">
    <location>
        <begin position="1"/>
        <end position="236"/>
    </location>
</feature>
<feature type="region of interest" description="Disordered" evidence="4">
    <location>
        <begin position="1"/>
        <end position="33"/>
    </location>
</feature>
<feature type="coiled-coil region" evidence="2">
    <location>
        <begin position="244"/>
        <end position="405"/>
    </location>
</feature>
<feature type="coiled-coil region" evidence="2">
    <location>
        <begin position="436"/>
        <end position="692"/>
    </location>
</feature>
<feature type="compositionally biased region" description="Polar residues" evidence="4">
    <location>
        <begin position="1"/>
        <end position="20"/>
    </location>
</feature>
<sequence>MLDLTNQESDSSENGNSKYADSTDGRGIGTSRRLDDEDLDERRKDLADLVFWMSGLKATTLPLDDHTSLCNGRAFAEILHEIDRSFFDERWLETMPEMRTSSNLVVKRSNLRKLWRKMSDYIQVLNRKVVSTRWTEIGDRLDGLDETDIPVAADLAMAVVSLAFIGKTQEKYIQYSQELPAGEHQHMMANVARLVQIVMEELPEVPTFHEISELDGSQNELNSSHVESSVITNGNGSAERRSTLSANDQVLVEAQLEIDELRSERDNLIKDVERLTKALESSQLDTSTCSEPNELSILEKQNEELRVKRRQAEERVLELEASMEHFQAIVVKLTDENDTLQSGQKELNMLKTHLDTAQSDVEEWRTIANKYQSDAEMLKKREKEVKELQGQVKSLTSRLEHHVKTATIDEDNKAGIVQLRSQIGTLTANNVELNVGLESKKRIVEQLELQLIQYKEKVKELEDRKEDLIAERNELENKLLFKESVTPRSLHESMFEAGHLSFDDKTKLPLEIENKRLTERIQELESLEPLKGEIIKMKSQNGVLEEEKLVITKQMEELERQVADLQEKLTKNQQHASGDVVELKVQLEKANVEVERMRETEMRTEAKLAGVEELLRKRNVEKEANETALQKAKAVIDELESRNRPVGEDNKTSVQDFKELKTENELLRQKNEALETALNTTTQSLEQENRLITSAAHQQILDRSSDSMMIMRAQAGSDHPQTLLDTQKMTRALPWRFGISSMLIIFMVWFFINTFCEVNAPPKA</sequence>
<evidence type="ECO:0000250" key="1"/>
<evidence type="ECO:0000255" key="2"/>
<evidence type="ECO:0000255" key="3">
    <source>
        <dbReference type="PROSITE-ProRule" id="PRU00044"/>
    </source>
</evidence>
<evidence type="ECO:0000256" key="4">
    <source>
        <dbReference type="SAM" id="MobiDB-lite"/>
    </source>
</evidence>
<evidence type="ECO:0000305" key="5"/>
<protein>
    <recommendedName>
        <fullName>Zygote defective protein 12</fullName>
    </recommendedName>
</protein>
<organism>
    <name type="scientific">Caenorhabditis briggsae</name>
    <dbReference type="NCBI Taxonomy" id="6238"/>
    <lineage>
        <taxon>Eukaryota</taxon>
        <taxon>Metazoa</taxon>
        <taxon>Ecdysozoa</taxon>
        <taxon>Nematoda</taxon>
        <taxon>Chromadorea</taxon>
        <taxon>Rhabditida</taxon>
        <taxon>Rhabditina</taxon>
        <taxon>Rhabditomorpha</taxon>
        <taxon>Rhabditoidea</taxon>
        <taxon>Rhabditidae</taxon>
        <taxon>Peloderinae</taxon>
        <taxon>Caenorhabditis</taxon>
    </lineage>
</organism>
<gene>
    <name type="primary">zyg-12</name>
    <name type="ORF">CBG02287</name>
</gene>